<organism>
    <name type="scientific">Albidiferax ferrireducens (strain ATCC BAA-621 / DSM 15236 / T118)</name>
    <name type="common">Rhodoferax ferrireducens</name>
    <dbReference type="NCBI Taxonomy" id="338969"/>
    <lineage>
        <taxon>Bacteria</taxon>
        <taxon>Pseudomonadati</taxon>
        <taxon>Pseudomonadota</taxon>
        <taxon>Betaproteobacteria</taxon>
        <taxon>Burkholderiales</taxon>
        <taxon>Comamonadaceae</taxon>
        <taxon>Rhodoferax</taxon>
    </lineage>
</organism>
<feature type="chain" id="PRO_0000293352" description="Small ribosomal subunit protein uS4">
    <location>
        <begin position="1"/>
        <end position="207"/>
    </location>
</feature>
<feature type="domain" description="S4 RNA-binding" evidence="1">
    <location>
        <begin position="97"/>
        <end position="160"/>
    </location>
</feature>
<feature type="region of interest" description="Disordered" evidence="2">
    <location>
        <begin position="31"/>
        <end position="53"/>
    </location>
</feature>
<reference key="1">
    <citation type="submission" date="2006-02" db="EMBL/GenBank/DDBJ databases">
        <title>Complete sequence of chromosome of Rhodoferax ferrireducens DSM 15236.</title>
        <authorList>
            <person name="Copeland A."/>
            <person name="Lucas S."/>
            <person name="Lapidus A."/>
            <person name="Barry K."/>
            <person name="Detter J.C."/>
            <person name="Glavina del Rio T."/>
            <person name="Hammon N."/>
            <person name="Israni S."/>
            <person name="Pitluck S."/>
            <person name="Brettin T."/>
            <person name="Bruce D."/>
            <person name="Han C."/>
            <person name="Tapia R."/>
            <person name="Gilna P."/>
            <person name="Kiss H."/>
            <person name="Schmutz J."/>
            <person name="Larimer F."/>
            <person name="Land M."/>
            <person name="Kyrpides N."/>
            <person name="Ivanova N."/>
            <person name="Richardson P."/>
        </authorList>
    </citation>
    <scope>NUCLEOTIDE SEQUENCE [LARGE SCALE GENOMIC DNA]</scope>
    <source>
        <strain>ATCC BAA-621 / DSM 15236 / T118</strain>
    </source>
</reference>
<protein>
    <recommendedName>
        <fullName evidence="1">Small ribosomal subunit protein uS4</fullName>
    </recommendedName>
    <alternativeName>
        <fullName evidence="3">30S ribosomal protein S4</fullName>
    </alternativeName>
</protein>
<gene>
    <name evidence="1" type="primary">rpsD</name>
    <name type="ordered locus">Rfer_4218</name>
</gene>
<comment type="function">
    <text evidence="1">One of the primary rRNA binding proteins, it binds directly to 16S rRNA where it nucleates assembly of the body of the 30S subunit.</text>
</comment>
<comment type="function">
    <text evidence="1">With S5 and S12 plays an important role in translational accuracy.</text>
</comment>
<comment type="subunit">
    <text evidence="1">Part of the 30S ribosomal subunit. Contacts protein S5. The interaction surface between S4 and S5 is involved in control of translational fidelity.</text>
</comment>
<comment type="similarity">
    <text evidence="1">Belongs to the universal ribosomal protein uS4 family.</text>
</comment>
<evidence type="ECO:0000255" key="1">
    <source>
        <dbReference type="HAMAP-Rule" id="MF_01306"/>
    </source>
</evidence>
<evidence type="ECO:0000256" key="2">
    <source>
        <dbReference type="SAM" id="MobiDB-lite"/>
    </source>
</evidence>
<evidence type="ECO:0000305" key="3"/>
<keyword id="KW-1185">Reference proteome</keyword>
<keyword id="KW-0687">Ribonucleoprotein</keyword>
<keyword id="KW-0689">Ribosomal protein</keyword>
<keyword id="KW-0694">RNA-binding</keyword>
<keyword id="KW-0699">rRNA-binding</keyword>
<proteinExistence type="inferred from homology"/>
<dbReference type="EMBL" id="CP000267">
    <property type="protein sequence ID" value="ABD71905.1"/>
    <property type="molecule type" value="Genomic_DNA"/>
</dbReference>
<dbReference type="RefSeq" id="WP_011466463.1">
    <property type="nucleotide sequence ID" value="NC_007908.1"/>
</dbReference>
<dbReference type="SMR" id="Q21QP8"/>
<dbReference type="STRING" id="338969.Rfer_4218"/>
<dbReference type="KEGG" id="rfr:Rfer_4218"/>
<dbReference type="eggNOG" id="COG0522">
    <property type="taxonomic scope" value="Bacteria"/>
</dbReference>
<dbReference type="HOGENOM" id="CLU_092403_0_2_4"/>
<dbReference type="OrthoDB" id="9803672at2"/>
<dbReference type="Proteomes" id="UP000008332">
    <property type="component" value="Chromosome"/>
</dbReference>
<dbReference type="GO" id="GO:0015935">
    <property type="term" value="C:small ribosomal subunit"/>
    <property type="evidence" value="ECO:0007669"/>
    <property type="project" value="InterPro"/>
</dbReference>
<dbReference type="GO" id="GO:0019843">
    <property type="term" value="F:rRNA binding"/>
    <property type="evidence" value="ECO:0007669"/>
    <property type="project" value="UniProtKB-UniRule"/>
</dbReference>
<dbReference type="GO" id="GO:0003735">
    <property type="term" value="F:structural constituent of ribosome"/>
    <property type="evidence" value="ECO:0007669"/>
    <property type="project" value="InterPro"/>
</dbReference>
<dbReference type="GO" id="GO:0042274">
    <property type="term" value="P:ribosomal small subunit biogenesis"/>
    <property type="evidence" value="ECO:0007669"/>
    <property type="project" value="TreeGrafter"/>
</dbReference>
<dbReference type="GO" id="GO:0006412">
    <property type="term" value="P:translation"/>
    <property type="evidence" value="ECO:0007669"/>
    <property type="project" value="UniProtKB-UniRule"/>
</dbReference>
<dbReference type="CDD" id="cd00165">
    <property type="entry name" value="S4"/>
    <property type="match status" value="1"/>
</dbReference>
<dbReference type="FunFam" id="1.10.1050.10:FF:000001">
    <property type="entry name" value="30S ribosomal protein S4"/>
    <property type="match status" value="1"/>
</dbReference>
<dbReference type="FunFam" id="3.10.290.10:FF:000001">
    <property type="entry name" value="30S ribosomal protein S4"/>
    <property type="match status" value="1"/>
</dbReference>
<dbReference type="Gene3D" id="1.10.1050.10">
    <property type="entry name" value="Ribosomal Protein S4 Delta 41, Chain A, domain 1"/>
    <property type="match status" value="1"/>
</dbReference>
<dbReference type="Gene3D" id="3.10.290.10">
    <property type="entry name" value="RNA-binding S4 domain"/>
    <property type="match status" value="1"/>
</dbReference>
<dbReference type="HAMAP" id="MF_01306_B">
    <property type="entry name" value="Ribosomal_uS4_B"/>
    <property type="match status" value="1"/>
</dbReference>
<dbReference type="InterPro" id="IPR022801">
    <property type="entry name" value="Ribosomal_uS4"/>
</dbReference>
<dbReference type="InterPro" id="IPR005709">
    <property type="entry name" value="Ribosomal_uS4_bac-type"/>
</dbReference>
<dbReference type="InterPro" id="IPR018079">
    <property type="entry name" value="Ribosomal_uS4_CS"/>
</dbReference>
<dbReference type="InterPro" id="IPR001912">
    <property type="entry name" value="Ribosomal_uS4_N"/>
</dbReference>
<dbReference type="InterPro" id="IPR002942">
    <property type="entry name" value="S4_RNA-bd"/>
</dbReference>
<dbReference type="InterPro" id="IPR036986">
    <property type="entry name" value="S4_RNA-bd_sf"/>
</dbReference>
<dbReference type="NCBIfam" id="NF003717">
    <property type="entry name" value="PRK05327.1"/>
    <property type="match status" value="1"/>
</dbReference>
<dbReference type="NCBIfam" id="TIGR01017">
    <property type="entry name" value="rpsD_bact"/>
    <property type="match status" value="1"/>
</dbReference>
<dbReference type="PANTHER" id="PTHR11831">
    <property type="entry name" value="30S 40S RIBOSOMAL PROTEIN"/>
    <property type="match status" value="1"/>
</dbReference>
<dbReference type="PANTHER" id="PTHR11831:SF4">
    <property type="entry name" value="SMALL RIBOSOMAL SUBUNIT PROTEIN US4M"/>
    <property type="match status" value="1"/>
</dbReference>
<dbReference type="Pfam" id="PF00163">
    <property type="entry name" value="Ribosomal_S4"/>
    <property type="match status" value="1"/>
</dbReference>
<dbReference type="Pfam" id="PF01479">
    <property type="entry name" value="S4"/>
    <property type="match status" value="1"/>
</dbReference>
<dbReference type="SMART" id="SM01390">
    <property type="entry name" value="Ribosomal_S4"/>
    <property type="match status" value="1"/>
</dbReference>
<dbReference type="SMART" id="SM00363">
    <property type="entry name" value="S4"/>
    <property type="match status" value="1"/>
</dbReference>
<dbReference type="SUPFAM" id="SSF55174">
    <property type="entry name" value="Alpha-L RNA-binding motif"/>
    <property type="match status" value="1"/>
</dbReference>
<dbReference type="PROSITE" id="PS00632">
    <property type="entry name" value="RIBOSOMAL_S4"/>
    <property type="match status" value="1"/>
</dbReference>
<dbReference type="PROSITE" id="PS50889">
    <property type="entry name" value="S4"/>
    <property type="match status" value="1"/>
</dbReference>
<name>RS4_ALBFT</name>
<sequence length="207" mass="23331">MARYLGPKAKLSRREGTDLFLKSARRSIGDKAKFDSKPGQHGRTSGARTSDFGLQLREKQKVKRMYGVLEKQFRRYFEEADRRKGNTGANLLSLLESRLDNVVYRMGFGSTRAEARQLVSHKAMTVNGKSVNIPSYMVKAGDMIAVRDKSKKQNRIVEALQLAQQVGMPAWVEINAEKAEGTFKAVPDRDQFAADVNESLIVELYSR</sequence>
<accession>Q21QP8</accession>